<organism>
    <name type="scientific">Bacillus subtilis (strain 168)</name>
    <dbReference type="NCBI Taxonomy" id="224308"/>
    <lineage>
        <taxon>Bacteria</taxon>
        <taxon>Bacillati</taxon>
        <taxon>Bacillota</taxon>
        <taxon>Bacilli</taxon>
        <taxon>Bacillales</taxon>
        <taxon>Bacillaceae</taxon>
        <taxon>Bacillus</taxon>
    </lineage>
</organism>
<gene>
    <name type="primary">ywjB</name>
    <name type="ordered locus">BSU37220</name>
</gene>
<dbReference type="EMBL" id="Z49782">
    <property type="protein sequence ID" value="CAA89863.1"/>
    <property type="molecule type" value="Genomic_DNA"/>
</dbReference>
<dbReference type="EMBL" id="AL009126">
    <property type="protein sequence ID" value="CAB15750.1"/>
    <property type="molecule type" value="Genomic_DNA"/>
</dbReference>
<dbReference type="PIR" id="S55416">
    <property type="entry name" value="S55416"/>
</dbReference>
<dbReference type="RefSeq" id="NP_391603.1">
    <property type="nucleotide sequence ID" value="NC_000964.3"/>
</dbReference>
<dbReference type="RefSeq" id="WP_003227595.1">
    <property type="nucleotide sequence ID" value="NZ_OZ025638.1"/>
</dbReference>
<dbReference type="SMR" id="P45862"/>
<dbReference type="FunCoup" id="P45862">
    <property type="interactions" value="14"/>
</dbReference>
<dbReference type="STRING" id="224308.BSU37220"/>
<dbReference type="PaxDb" id="224308-BSU37220"/>
<dbReference type="EnsemblBacteria" id="CAB15750">
    <property type="protein sequence ID" value="CAB15750"/>
    <property type="gene ID" value="BSU_37220"/>
</dbReference>
<dbReference type="GeneID" id="938455"/>
<dbReference type="KEGG" id="bsu:BSU37220"/>
<dbReference type="PATRIC" id="fig|224308.179.peg.4032"/>
<dbReference type="eggNOG" id="COG0262">
    <property type="taxonomic scope" value="Bacteria"/>
</dbReference>
<dbReference type="InParanoid" id="P45862"/>
<dbReference type="OrthoDB" id="195113at2"/>
<dbReference type="PhylomeDB" id="P45862"/>
<dbReference type="BioCyc" id="BSUB:BSU37220-MONOMER"/>
<dbReference type="Proteomes" id="UP000001570">
    <property type="component" value="Chromosome"/>
</dbReference>
<dbReference type="GO" id="GO:0016020">
    <property type="term" value="C:membrane"/>
    <property type="evidence" value="ECO:0007669"/>
    <property type="project" value="UniProtKB-SubCell"/>
</dbReference>
<dbReference type="GO" id="GO:0008703">
    <property type="term" value="F:5-amino-6-(5-phosphoribosylamino)uracil reductase activity"/>
    <property type="evidence" value="ECO:0007669"/>
    <property type="project" value="InterPro"/>
</dbReference>
<dbReference type="GO" id="GO:0009231">
    <property type="term" value="P:riboflavin biosynthetic process"/>
    <property type="evidence" value="ECO:0007669"/>
    <property type="project" value="InterPro"/>
</dbReference>
<dbReference type="Gene3D" id="3.40.430.10">
    <property type="entry name" value="Dihydrofolate Reductase, subunit A"/>
    <property type="match status" value="1"/>
</dbReference>
<dbReference type="InterPro" id="IPR024072">
    <property type="entry name" value="DHFR-like_dom_sf"/>
</dbReference>
<dbReference type="InterPro" id="IPR002734">
    <property type="entry name" value="RibDG_C"/>
</dbReference>
<dbReference type="InterPro" id="IPR050765">
    <property type="entry name" value="Riboflavin_Biosynth_HTPR"/>
</dbReference>
<dbReference type="PANTHER" id="PTHR38011:SF11">
    <property type="entry name" value="2,5-DIAMINO-6-RIBOSYLAMINO-4(3H)-PYRIMIDINONE 5'-PHOSPHATE REDUCTASE"/>
    <property type="match status" value="1"/>
</dbReference>
<dbReference type="PANTHER" id="PTHR38011">
    <property type="entry name" value="DIHYDROFOLATE REDUCTASE FAMILY PROTEIN (AFU_ORTHOLOGUE AFUA_8G06820)"/>
    <property type="match status" value="1"/>
</dbReference>
<dbReference type="Pfam" id="PF01872">
    <property type="entry name" value="RibD_C"/>
    <property type="match status" value="1"/>
</dbReference>
<dbReference type="SUPFAM" id="SSF53597">
    <property type="entry name" value="Dihydrofolate reductase-like"/>
    <property type="match status" value="1"/>
</dbReference>
<feature type="chain" id="PRO_0000049975" description="Uncharacterized protein YwjB">
    <location>
        <begin position="1"/>
        <end position="174"/>
    </location>
</feature>
<feature type="transmembrane region" description="Helical" evidence="1">
    <location>
        <begin position="126"/>
        <end position="146"/>
    </location>
</feature>
<keyword id="KW-0472">Membrane</keyword>
<keyword id="KW-1185">Reference proteome</keyword>
<keyword id="KW-0812">Transmembrane</keyword>
<keyword id="KW-1133">Transmembrane helix</keyword>
<comment type="subcellular location">
    <subcellularLocation>
        <location evidence="2">Membrane</location>
        <topology evidence="2">Single-pass membrane protein</topology>
    </subcellularLocation>
</comment>
<comment type="similarity">
    <text evidence="2">To B.subtilis YyaP.</text>
</comment>
<evidence type="ECO:0000255" key="1"/>
<evidence type="ECO:0000305" key="2"/>
<proteinExistence type="predicted"/>
<reference key="1">
    <citation type="journal article" date="1997" name="Microbiology">
        <title>The Bacillus subtilis genome from gerBC (311 degrees) to licR (334 degrees).</title>
        <authorList>
            <person name="Presecan E."/>
            <person name="Moszer I."/>
            <person name="Boursier L."/>
            <person name="Cruz Ramos H."/>
            <person name="De La Fuente V."/>
            <person name="Hullo M.-F."/>
            <person name="Lelong C."/>
            <person name="Schleich S."/>
            <person name="Sekowska A."/>
            <person name="Song B.H."/>
            <person name="Villani G."/>
            <person name="Kunst F."/>
            <person name="Danchin A."/>
            <person name="Glaser P."/>
        </authorList>
    </citation>
    <scope>NUCLEOTIDE SEQUENCE [GENOMIC DNA]</scope>
    <source>
        <strain>168</strain>
    </source>
</reference>
<reference key="2">
    <citation type="journal article" date="1997" name="Nature">
        <title>The complete genome sequence of the Gram-positive bacterium Bacillus subtilis.</title>
        <authorList>
            <person name="Kunst F."/>
            <person name="Ogasawara N."/>
            <person name="Moszer I."/>
            <person name="Albertini A.M."/>
            <person name="Alloni G."/>
            <person name="Azevedo V."/>
            <person name="Bertero M.G."/>
            <person name="Bessieres P."/>
            <person name="Bolotin A."/>
            <person name="Borchert S."/>
            <person name="Borriss R."/>
            <person name="Boursier L."/>
            <person name="Brans A."/>
            <person name="Braun M."/>
            <person name="Brignell S.C."/>
            <person name="Bron S."/>
            <person name="Brouillet S."/>
            <person name="Bruschi C.V."/>
            <person name="Caldwell B."/>
            <person name="Capuano V."/>
            <person name="Carter N.M."/>
            <person name="Choi S.-K."/>
            <person name="Codani J.-J."/>
            <person name="Connerton I.F."/>
            <person name="Cummings N.J."/>
            <person name="Daniel R.A."/>
            <person name="Denizot F."/>
            <person name="Devine K.M."/>
            <person name="Duesterhoeft A."/>
            <person name="Ehrlich S.D."/>
            <person name="Emmerson P.T."/>
            <person name="Entian K.-D."/>
            <person name="Errington J."/>
            <person name="Fabret C."/>
            <person name="Ferrari E."/>
            <person name="Foulger D."/>
            <person name="Fritz C."/>
            <person name="Fujita M."/>
            <person name="Fujita Y."/>
            <person name="Fuma S."/>
            <person name="Galizzi A."/>
            <person name="Galleron N."/>
            <person name="Ghim S.-Y."/>
            <person name="Glaser P."/>
            <person name="Goffeau A."/>
            <person name="Golightly E.J."/>
            <person name="Grandi G."/>
            <person name="Guiseppi G."/>
            <person name="Guy B.J."/>
            <person name="Haga K."/>
            <person name="Haiech J."/>
            <person name="Harwood C.R."/>
            <person name="Henaut A."/>
            <person name="Hilbert H."/>
            <person name="Holsappel S."/>
            <person name="Hosono S."/>
            <person name="Hullo M.-F."/>
            <person name="Itaya M."/>
            <person name="Jones L.-M."/>
            <person name="Joris B."/>
            <person name="Karamata D."/>
            <person name="Kasahara Y."/>
            <person name="Klaerr-Blanchard M."/>
            <person name="Klein C."/>
            <person name="Kobayashi Y."/>
            <person name="Koetter P."/>
            <person name="Koningstein G."/>
            <person name="Krogh S."/>
            <person name="Kumano M."/>
            <person name="Kurita K."/>
            <person name="Lapidus A."/>
            <person name="Lardinois S."/>
            <person name="Lauber J."/>
            <person name="Lazarevic V."/>
            <person name="Lee S.-M."/>
            <person name="Levine A."/>
            <person name="Liu H."/>
            <person name="Masuda S."/>
            <person name="Mauel C."/>
            <person name="Medigue C."/>
            <person name="Medina N."/>
            <person name="Mellado R.P."/>
            <person name="Mizuno M."/>
            <person name="Moestl D."/>
            <person name="Nakai S."/>
            <person name="Noback M."/>
            <person name="Noone D."/>
            <person name="O'Reilly M."/>
            <person name="Ogawa K."/>
            <person name="Ogiwara A."/>
            <person name="Oudega B."/>
            <person name="Park S.-H."/>
            <person name="Parro V."/>
            <person name="Pohl T.M."/>
            <person name="Portetelle D."/>
            <person name="Porwollik S."/>
            <person name="Prescott A.M."/>
            <person name="Presecan E."/>
            <person name="Pujic P."/>
            <person name="Purnelle B."/>
            <person name="Rapoport G."/>
            <person name="Rey M."/>
            <person name="Reynolds S."/>
            <person name="Rieger M."/>
            <person name="Rivolta C."/>
            <person name="Rocha E."/>
            <person name="Roche B."/>
            <person name="Rose M."/>
            <person name="Sadaie Y."/>
            <person name="Sato T."/>
            <person name="Scanlan E."/>
            <person name="Schleich S."/>
            <person name="Schroeter R."/>
            <person name="Scoffone F."/>
            <person name="Sekiguchi J."/>
            <person name="Sekowska A."/>
            <person name="Seror S.J."/>
            <person name="Serror P."/>
            <person name="Shin B.-S."/>
            <person name="Soldo B."/>
            <person name="Sorokin A."/>
            <person name="Tacconi E."/>
            <person name="Takagi T."/>
            <person name="Takahashi H."/>
            <person name="Takemaru K."/>
            <person name="Takeuchi M."/>
            <person name="Tamakoshi A."/>
            <person name="Tanaka T."/>
            <person name="Terpstra P."/>
            <person name="Tognoni A."/>
            <person name="Tosato V."/>
            <person name="Uchiyama S."/>
            <person name="Vandenbol M."/>
            <person name="Vannier F."/>
            <person name="Vassarotti A."/>
            <person name="Viari A."/>
            <person name="Wambutt R."/>
            <person name="Wedler E."/>
            <person name="Wedler H."/>
            <person name="Weitzenegger T."/>
            <person name="Winters P."/>
            <person name="Wipat A."/>
            <person name="Yamamoto H."/>
            <person name="Yamane K."/>
            <person name="Yasumoto K."/>
            <person name="Yata K."/>
            <person name="Yoshida K."/>
            <person name="Yoshikawa H.-F."/>
            <person name="Zumstein E."/>
            <person name="Yoshikawa H."/>
            <person name="Danchin A."/>
        </authorList>
    </citation>
    <scope>NUCLEOTIDE SEQUENCE [LARGE SCALE GENOMIC DNA]</scope>
    <source>
        <strain>168</strain>
    </source>
</reference>
<name>YWJB_BACSU</name>
<protein>
    <recommendedName>
        <fullName>Uncharacterized protein YwjB</fullName>
    </recommendedName>
</protein>
<sequence length="174" mass="19582">MERKTVLYIAVSLDGMIAKEDGSIDWLDEFEGEGDNGYSDFYQTVDTVILGRSTYEHVKVLTPVFPYQDKTCYVFTGSPDSYQDEHVTFINEGARAFTARLKQEKGSNIWIAGGAELVNDFMKEDAIDEFIITVIPVVLGSGIPLFHELTNETKLRLKGTKQFGQAVQLHYVRA</sequence>
<accession>P45862</accession>